<geneLocation type="chloroplast"/>
<reference key="1">
    <citation type="journal article" date="2003" name="Mol. Phylogenet. Evol.">
        <title>Inference of higher-order relationships in the cycads from a large chloroplast data set.</title>
        <authorList>
            <person name="Rai H.S."/>
            <person name="O'Brien H.E."/>
            <person name="Reeves P.A."/>
            <person name="Olmstead R.G."/>
            <person name="Graham S.W."/>
        </authorList>
    </citation>
    <scope>NUCLEOTIDE SEQUENCE [GENOMIC DNA]</scope>
</reference>
<comment type="function">
    <text evidence="1">One of the components of the core complex of photosystem II (PSII). PSII is a light-driven water:plastoquinone oxidoreductase that uses light energy to abstract electrons from H(2)O, generating O(2) and a proton gradient subsequently used for ATP formation. It consists of a core antenna complex that captures photons, and an electron transfer chain that converts photonic excitation into a charge separation. This subunit is found at the monomer-monomer interface and is required for correct PSII assembly and/or dimerization.</text>
</comment>
<comment type="subunit">
    <text evidence="1">PSII is composed of 1 copy each of membrane proteins PsbA, PsbB, PsbC, PsbD, PsbE, PsbF, PsbH, PsbI, PsbJ, PsbK, PsbL, PsbM, PsbT, PsbX, PsbY, PsbZ, Psb30/Ycf12, at least 3 peripheral proteins of the oxygen-evolving complex and a large number of cofactors. It forms dimeric complexes.</text>
</comment>
<comment type="subcellular location">
    <subcellularLocation>
        <location evidence="1">Plastid</location>
        <location evidence="1">Chloroplast thylakoid membrane</location>
        <topology evidence="1">Single-pass membrane protein</topology>
    </subcellularLocation>
</comment>
<comment type="similarity">
    <text evidence="1">Belongs to the PsbL family.</text>
</comment>
<dbReference type="EMBL" id="AF469714">
    <property type="protein sequence ID" value="AAQ05226.1"/>
    <property type="molecule type" value="Genomic_DNA"/>
</dbReference>
<dbReference type="RefSeq" id="YP_003934200.1">
    <property type="nucleotide sequence ID" value="NC_014575.1"/>
</dbReference>
<dbReference type="SMR" id="Q71L78"/>
<dbReference type="GeneID" id="9845507"/>
<dbReference type="GO" id="GO:0009535">
    <property type="term" value="C:chloroplast thylakoid membrane"/>
    <property type="evidence" value="ECO:0007669"/>
    <property type="project" value="UniProtKB-SubCell"/>
</dbReference>
<dbReference type="GO" id="GO:0009539">
    <property type="term" value="C:photosystem II reaction center"/>
    <property type="evidence" value="ECO:0007669"/>
    <property type="project" value="InterPro"/>
</dbReference>
<dbReference type="GO" id="GO:0015979">
    <property type="term" value="P:photosynthesis"/>
    <property type="evidence" value="ECO:0007669"/>
    <property type="project" value="UniProtKB-UniRule"/>
</dbReference>
<dbReference type="HAMAP" id="MF_01317">
    <property type="entry name" value="PSII_PsbL"/>
    <property type="match status" value="1"/>
</dbReference>
<dbReference type="InterPro" id="IPR003372">
    <property type="entry name" value="PSII_PsbL"/>
</dbReference>
<dbReference type="InterPro" id="IPR037266">
    <property type="entry name" value="PSII_PsbL_sf"/>
</dbReference>
<dbReference type="Pfam" id="PF02419">
    <property type="entry name" value="PsbL"/>
    <property type="match status" value="1"/>
</dbReference>
<dbReference type="SUPFAM" id="SSF161017">
    <property type="entry name" value="Photosystem II reaction center protein L, PsbL"/>
    <property type="match status" value="1"/>
</dbReference>
<keyword id="KW-0150">Chloroplast</keyword>
<keyword id="KW-0472">Membrane</keyword>
<keyword id="KW-0602">Photosynthesis</keyword>
<keyword id="KW-0604">Photosystem II</keyword>
<keyword id="KW-0934">Plastid</keyword>
<keyword id="KW-0674">Reaction center</keyword>
<keyword id="KW-0793">Thylakoid</keyword>
<keyword id="KW-0812">Transmembrane</keyword>
<keyword id="KW-1133">Transmembrane helix</keyword>
<accession>Q71L78</accession>
<proteinExistence type="inferred from homology"/>
<name>PSBL_CEDDE</name>
<evidence type="ECO:0000255" key="1">
    <source>
        <dbReference type="HAMAP-Rule" id="MF_01317"/>
    </source>
</evidence>
<gene>
    <name evidence="1" type="primary">psbL</name>
</gene>
<sequence length="38" mass="4467">MTQSNPNDQNVELNRTSLYWGLLLIFVLAVPFSNYFFN</sequence>
<organism>
    <name type="scientific">Cedrus deodara</name>
    <name type="common">Deodar cedar</name>
    <name type="synonym">Pinus deodara</name>
    <dbReference type="NCBI Taxonomy" id="3322"/>
    <lineage>
        <taxon>Eukaryota</taxon>
        <taxon>Viridiplantae</taxon>
        <taxon>Streptophyta</taxon>
        <taxon>Embryophyta</taxon>
        <taxon>Tracheophyta</taxon>
        <taxon>Spermatophyta</taxon>
        <taxon>Pinopsida</taxon>
        <taxon>Pinidae</taxon>
        <taxon>Conifers I</taxon>
        <taxon>Pinales</taxon>
        <taxon>Pinaceae</taxon>
        <taxon>Cedrus</taxon>
    </lineage>
</organism>
<protein>
    <recommendedName>
        <fullName evidence="1">Photosystem II reaction center protein L</fullName>
        <shortName evidence="1">PSII-L</shortName>
    </recommendedName>
</protein>
<feature type="chain" id="PRO_0000219692" description="Photosystem II reaction center protein L">
    <location>
        <begin position="1"/>
        <end position="38"/>
    </location>
</feature>
<feature type="transmembrane region" description="Helical" evidence="1">
    <location>
        <begin position="17"/>
        <end position="37"/>
    </location>
</feature>